<accession>Q90WI4</accession>
<keyword id="KW-0130">Cell adhesion</keyword>
<keyword id="KW-1003">Cell membrane</keyword>
<keyword id="KW-1015">Disulfide bond</keyword>
<keyword id="KW-0325">Glycoprotein</keyword>
<keyword id="KW-0393">Immunoglobulin domain</keyword>
<keyword id="KW-0472">Membrane</keyword>
<keyword id="KW-1185">Reference proteome</keyword>
<keyword id="KW-0677">Repeat</keyword>
<keyword id="KW-0732">Signal</keyword>
<keyword id="KW-0812">Transmembrane</keyword>
<keyword id="KW-1133">Transmembrane helix</keyword>
<feature type="signal peptide" evidence="2">
    <location>
        <begin position="1"/>
        <end position="22"/>
    </location>
</feature>
<feature type="chain" id="PRO_0000298668" description="Matrix remodeling-associated protein 8">
    <location>
        <begin position="23"/>
        <end position="437"/>
    </location>
</feature>
<feature type="topological domain" description="Extracellular" evidence="2">
    <location>
        <begin position="23"/>
        <end position="339"/>
    </location>
</feature>
<feature type="transmembrane region" description="Helical" evidence="2">
    <location>
        <begin position="340"/>
        <end position="360"/>
    </location>
</feature>
<feature type="topological domain" description="Cytoplasmic" evidence="2">
    <location>
        <begin position="361"/>
        <end position="437"/>
    </location>
</feature>
<feature type="domain" description="Ig-like V-type 1">
    <location>
        <begin position="32"/>
        <end position="159"/>
    </location>
</feature>
<feature type="domain" description="Ig-like V-type 2">
    <location>
        <begin position="167"/>
        <end position="294"/>
    </location>
</feature>
<feature type="glycosylation site" description="N-linked (GlcNAc...) asparagine" evidence="2">
    <location>
        <position position="41"/>
    </location>
</feature>
<feature type="glycosylation site" description="N-linked (GlcNAc...) asparagine" evidence="2">
    <location>
        <position position="121"/>
    </location>
</feature>
<feature type="glycosylation site" description="N-linked (GlcNAc...) asparagine" evidence="2">
    <location>
        <position position="246"/>
    </location>
</feature>
<feature type="glycosylation site" description="N-linked (GlcNAc...) asparagine" evidence="2">
    <location>
        <position position="304"/>
    </location>
</feature>
<feature type="disulfide bond" evidence="3">
    <location>
        <begin position="54"/>
        <end position="139"/>
    </location>
</feature>
<feature type="disulfide bond" evidence="3">
    <location>
        <begin position="188"/>
        <end position="274"/>
    </location>
</feature>
<name>MXRA8_CHICK</name>
<protein>
    <recommendedName>
        <fullName>Matrix remodeling-associated protein 8</fullName>
    </recommendedName>
    <alternativeName>
        <fullName>Plasma membrane protein 1B3</fullName>
    </alternativeName>
</protein>
<gene>
    <name type="primary">MXRA8</name>
</gene>
<sequence>MEQLAKLLLWQLLLQQSSVVYLYSVPADASNPDSVVVSVLNISATRGSQAVLPCKSYRMVWTQDRLNDRQRVVHWDVYSTYYGDNKMERLCDMYSAGNQRVYSSYNQGRILMPQNAFTDGNFSLVIKDVAESDAGVYSCNLHHHYCHLYETVKIQLDITKKAKAAKEYWDGEKAVIVALEGSTVMLPCVNRNHIWTERHSEEEQQVVHWDRQPPGVPHDRADRLIDLYASGERRSYGPLFIRQKMNITDTAFALGDFSLRISELENADEGTYSCHLHHHYCGLHERRIYQVFVTEPVREKKVVNLTTHNTAPAIDPNVVRGHNVINVIIPESRIHFFQQLGYVLATLLLFVVLLIIVVFITRKRRQRGYEYNVKKYGEKDVNLKEFTVDTTDLTQYKSEDIRLDYKNNILKEKAEQARSFPAKNIDLDKDFRKEYCK</sequence>
<dbReference type="EMBL" id="AF373843">
    <property type="protein sequence ID" value="AAK55399.1"/>
    <property type="molecule type" value="mRNA"/>
</dbReference>
<dbReference type="RefSeq" id="NP_989967.1">
    <property type="nucleotide sequence ID" value="NM_204636.3"/>
</dbReference>
<dbReference type="SMR" id="Q90WI4"/>
<dbReference type="FunCoup" id="Q90WI4">
    <property type="interactions" value="140"/>
</dbReference>
<dbReference type="STRING" id="9031.ENSGALP00000067718"/>
<dbReference type="GlyCosmos" id="Q90WI4">
    <property type="glycosylation" value="4 sites, No reported glycans"/>
</dbReference>
<dbReference type="GlyGen" id="Q90WI4">
    <property type="glycosylation" value="4 sites"/>
</dbReference>
<dbReference type="PaxDb" id="9031-ENSGALP00000034500"/>
<dbReference type="Ensembl" id="ENSGALT00010043477.1">
    <property type="protein sequence ID" value="ENSGALP00010025849.1"/>
    <property type="gene ID" value="ENSGALG00010017974.1"/>
</dbReference>
<dbReference type="GeneID" id="395347"/>
<dbReference type="KEGG" id="gga:395347"/>
<dbReference type="CTD" id="54587"/>
<dbReference type="VEuPathDB" id="HostDB:geneid_395347"/>
<dbReference type="eggNOG" id="ENOG502QRZ7">
    <property type="taxonomic scope" value="Eukaryota"/>
</dbReference>
<dbReference type="GeneTree" id="ENSGT00390000001509"/>
<dbReference type="HOGENOM" id="CLU_062248_1_0_1"/>
<dbReference type="InParanoid" id="Q90WI4"/>
<dbReference type="OrthoDB" id="9832369at2759"/>
<dbReference type="PhylomeDB" id="Q90WI4"/>
<dbReference type="Reactome" id="R-GGA-381426">
    <property type="pathway name" value="Regulation of Insulin-like Growth Factor (IGF) transport and uptake by Insulin-like Growth Factor Binding Proteins (IGFBPs)"/>
</dbReference>
<dbReference type="Reactome" id="R-GGA-8957275">
    <property type="pathway name" value="Post-translational protein phosphorylation"/>
</dbReference>
<dbReference type="PRO" id="PR:Q90WI4"/>
<dbReference type="Proteomes" id="UP000000539">
    <property type="component" value="Chromosome 21"/>
</dbReference>
<dbReference type="Bgee" id="ENSGALG00000001561">
    <property type="expression patterns" value="Expressed in lung and 13 other cell types or tissues"/>
</dbReference>
<dbReference type="GO" id="GO:0009986">
    <property type="term" value="C:cell surface"/>
    <property type="evidence" value="ECO:0000318"/>
    <property type="project" value="GO_Central"/>
</dbReference>
<dbReference type="GO" id="GO:0005886">
    <property type="term" value="C:plasma membrane"/>
    <property type="evidence" value="ECO:0007669"/>
    <property type="project" value="UniProtKB-SubCell"/>
</dbReference>
<dbReference type="GO" id="GO:0007155">
    <property type="term" value="P:cell adhesion"/>
    <property type="evidence" value="ECO:0007669"/>
    <property type="project" value="UniProtKB-KW"/>
</dbReference>
<dbReference type="GO" id="GO:0030154">
    <property type="term" value="P:cell differentiation"/>
    <property type="evidence" value="ECO:0000318"/>
    <property type="project" value="GO_Central"/>
</dbReference>
<dbReference type="FunFam" id="2.60.40.10:FF:000806">
    <property type="entry name" value="Matrix remodeling associated 8"/>
    <property type="match status" value="1"/>
</dbReference>
<dbReference type="Gene3D" id="2.60.40.10">
    <property type="entry name" value="Immunoglobulins"/>
    <property type="match status" value="2"/>
</dbReference>
<dbReference type="InterPro" id="IPR007110">
    <property type="entry name" value="Ig-like_dom"/>
</dbReference>
<dbReference type="InterPro" id="IPR036179">
    <property type="entry name" value="Ig-like_dom_sf"/>
</dbReference>
<dbReference type="InterPro" id="IPR013783">
    <property type="entry name" value="Ig-like_fold"/>
</dbReference>
<dbReference type="InterPro" id="IPR003599">
    <property type="entry name" value="Ig_sub"/>
</dbReference>
<dbReference type="InterPro" id="IPR013106">
    <property type="entry name" value="Ig_V-set"/>
</dbReference>
<dbReference type="InterPro" id="IPR042472">
    <property type="entry name" value="MXRA8"/>
</dbReference>
<dbReference type="PANTHER" id="PTHR44793">
    <property type="entry name" value="MATRIX REMODELING-ASSOCIATED PROTEIN 8"/>
    <property type="match status" value="1"/>
</dbReference>
<dbReference type="PANTHER" id="PTHR44793:SF1">
    <property type="entry name" value="MATRIX REMODELING-ASSOCIATED PROTEIN 8"/>
    <property type="match status" value="1"/>
</dbReference>
<dbReference type="Pfam" id="PF07686">
    <property type="entry name" value="V-set"/>
    <property type="match status" value="1"/>
</dbReference>
<dbReference type="SMART" id="SM00409">
    <property type="entry name" value="IG"/>
    <property type="match status" value="2"/>
</dbReference>
<dbReference type="SMART" id="SM00406">
    <property type="entry name" value="IGv"/>
    <property type="match status" value="1"/>
</dbReference>
<dbReference type="SUPFAM" id="SSF48726">
    <property type="entry name" value="Immunoglobulin"/>
    <property type="match status" value="2"/>
</dbReference>
<dbReference type="PROSITE" id="PS50835">
    <property type="entry name" value="IG_LIKE"/>
    <property type="match status" value="2"/>
</dbReference>
<organism>
    <name type="scientific">Gallus gallus</name>
    <name type="common">Chicken</name>
    <dbReference type="NCBI Taxonomy" id="9031"/>
    <lineage>
        <taxon>Eukaryota</taxon>
        <taxon>Metazoa</taxon>
        <taxon>Chordata</taxon>
        <taxon>Craniata</taxon>
        <taxon>Vertebrata</taxon>
        <taxon>Euteleostomi</taxon>
        <taxon>Archelosauria</taxon>
        <taxon>Archosauria</taxon>
        <taxon>Dinosauria</taxon>
        <taxon>Saurischia</taxon>
        <taxon>Theropoda</taxon>
        <taxon>Coelurosauria</taxon>
        <taxon>Aves</taxon>
        <taxon>Neognathae</taxon>
        <taxon>Galloanserae</taxon>
        <taxon>Galliformes</taxon>
        <taxon>Phasianidae</taxon>
        <taxon>Phasianinae</taxon>
        <taxon>Gallus</taxon>
    </lineage>
</organism>
<evidence type="ECO:0000250" key="1">
    <source>
        <dbReference type="UniProtKB" id="Q9DBV4"/>
    </source>
</evidence>
<evidence type="ECO:0000255" key="2"/>
<evidence type="ECO:0000255" key="3">
    <source>
        <dbReference type="PROSITE-ProRule" id="PRU00114"/>
    </source>
</evidence>
<proteinExistence type="evidence at transcript level"/>
<comment type="function">
    <text evidence="1">Transmembrane protein which can modulate activity of various signaling pathways, probably via binding to integrin ITGAV:ITGB3. Mediates heterophilic cell-cell interactions in vitro.</text>
</comment>
<comment type="subunit">
    <text evidence="1">Homodimer in cis. Does not appear to form trans-homodimers.</text>
</comment>
<comment type="subcellular location">
    <subcellularLocation>
        <location evidence="1">Cell membrane</location>
        <topology evidence="2">Single-pass type I membrane protein</topology>
    </subcellularLocation>
</comment>
<reference key="1">
    <citation type="submission" date="2001-04" db="EMBL/GenBank/DDBJ databases">
        <title>An anti cell adhesive protein from embryonic chick kidney.</title>
        <authorList>
            <person name="Dong S."/>
            <person name="Halfter W."/>
        </authorList>
    </citation>
    <scope>NUCLEOTIDE SEQUENCE [MRNA]</scope>
    <source>
        <tissue>Kidney</tissue>
    </source>
</reference>